<reference key="1">
    <citation type="submission" date="2008-02" db="EMBL/GenBank/DDBJ databases">
        <title>Complete sequence of Escherichia coli C str. ATCC 8739.</title>
        <authorList>
            <person name="Copeland A."/>
            <person name="Lucas S."/>
            <person name="Lapidus A."/>
            <person name="Glavina del Rio T."/>
            <person name="Dalin E."/>
            <person name="Tice H."/>
            <person name="Bruce D."/>
            <person name="Goodwin L."/>
            <person name="Pitluck S."/>
            <person name="Kiss H."/>
            <person name="Brettin T."/>
            <person name="Detter J.C."/>
            <person name="Han C."/>
            <person name="Kuske C.R."/>
            <person name="Schmutz J."/>
            <person name="Larimer F."/>
            <person name="Land M."/>
            <person name="Hauser L."/>
            <person name="Kyrpides N."/>
            <person name="Mikhailova N."/>
            <person name="Ingram L."/>
            <person name="Richardson P."/>
        </authorList>
    </citation>
    <scope>NUCLEOTIDE SEQUENCE [LARGE SCALE GENOMIC DNA]</scope>
    <source>
        <strain>ATCC 8739 / DSM 1576 / NBRC 3972 / NCIMB 8545 / WDCM 00012 / Crooks</strain>
    </source>
</reference>
<name>RL20_ECOLC</name>
<evidence type="ECO:0000255" key="1">
    <source>
        <dbReference type="HAMAP-Rule" id="MF_00382"/>
    </source>
</evidence>
<evidence type="ECO:0000305" key="2"/>
<gene>
    <name evidence="1" type="primary">rplT</name>
    <name type="ordered locus">EcolC_1916</name>
</gene>
<dbReference type="EMBL" id="CP000946">
    <property type="protein sequence ID" value="ACA77562.1"/>
    <property type="molecule type" value="Genomic_DNA"/>
</dbReference>
<dbReference type="RefSeq" id="WP_000124850.1">
    <property type="nucleotide sequence ID" value="NZ_MTFT01000006.1"/>
</dbReference>
<dbReference type="SMR" id="B1IPL2"/>
<dbReference type="GeneID" id="98388757"/>
<dbReference type="KEGG" id="ecl:EcolC_1916"/>
<dbReference type="HOGENOM" id="CLU_123265_0_1_6"/>
<dbReference type="GO" id="GO:1990904">
    <property type="term" value="C:ribonucleoprotein complex"/>
    <property type="evidence" value="ECO:0007669"/>
    <property type="project" value="UniProtKB-KW"/>
</dbReference>
<dbReference type="GO" id="GO:0005840">
    <property type="term" value="C:ribosome"/>
    <property type="evidence" value="ECO:0007669"/>
    <property type="project" value="UniProtKB-KW"/>
</dbReference>
<dbReference type="GO" id="GO:0019843">
    <property type="term" value="F:rRNA binding"/>
    <property type="evidence" value="ECO:0007669"/>
    <property type="project" value="UniProtKB-UniRule"/>
</dbReference>
<dbReference type="GO" id="GO:0003735">
    <property type="term" value="F:structural constituent of ribosome"/>
    <property type="evidence" value="ECO:0007669"/>
    <property type="project" value="InterPro"/>
</dbReference>
<dbReference type="GO" id="GO:0000027">
    <property type="term" value="P:ribosomal large subunit assembly"/>
    <property type="evidence" value="ECO:0007669"/>
    <property type="project" value="UniProtKB-UniRule"/>
</dbReference>
<dbReference type="GO" id="GO:0006412">
    <property type="term" value="P:translation"/>
    <property type="evidence" value="ECO:0007669"/>
    <property type="project" value="InterPro"/>
</dbReference>
<dbReference type="CDD" id="cd07026">
    <property type="entry name" value="Ribosomal_L20"/>
    <property type="match status" value="1"/>
</dbReference>
<dbReference type="FunFam" id="1.10.1900.20:FF:000001">
    <property type="entry name" value="50S ribosomal protein L20"/>
    <property type="match status" value="1"/>
</dbReference>
<dbReference type="Gene3D" id="6.10.160.10">
    <property type="match status" value="1"/>
</dbReference>
<dbReference type="Gene3D" id="1.10.1900.20">
    <property type="entry name" value="Ribosomal protein L20"/>
    <property type="match status" value="1"/>
</dbReference>
<dbReference type="HAMAP" id="MF_00382">
    <property type="entry name" value="Ribosomal_bL20"/>
    <property type="match status" value="1"/>
</dbReference>
<dbReference type="InterPro" id="IPR005813">
    <property type="entry name" value="Ribosomal_bL20"/>
</dbReference>
<dbReference type="InterPro" id="IPR049946">
    <property type="entry name" value="RIBOSOMAL_L20_CS"/>
</dbReference>
<dbReference type="InterPro" id="IPR035566">
    <property type="entry name" value="Ribosomal_protein_bL20_C"/>
</dbReference>
<dbReference type="NCBIfam" id="TIGR01032">
    <property type="entry name" value="rplT_bact"/>
    <property type="match status" value="1"/>
</dbReference>
<dbReference type="PANTHER" id="PTHR10986">
    <property type="entry name" value="39S RIBOSOMAL PROTEIN L20"/>
    <property type="match status" value="1"/>
</dbReference>
<dbReference type="Pfam" id="PF00453">
    <property type="entry name" value="Ribosomal_L20"/>
    <property type="match status" value="1"/>
</dbReference>
<dbReference type="PRINTS" id="PR00062">
    <property type="entry name" value="RIBOSOMALL20"/>
</dbReference>
<dbReference type="SUPFAM" id="SSF74731">
    <property type="entry name" value="Ribosomal protein L20"/>
    <property type="match status" value="1"/>
</dbReference>
<dbReference type="PROSITE" id="PS00937">
    <property type="entry name" value="RIBOSOMAL_L20"/>
    <property type="match status" value="1"/>
</dbReference>
<sequence length="118" mass="13497">MARVKRGVIARARHKKILKQAKGYYGARSRVYRVAFQAVIKAGQYAYRDRRQRKRQFRQLWIARINAAARQNGISYSKFINGLKKASVEIDRKILADIAVFDKVAFTALVEKAKAALA</sequence>
<proteinExistence type="inferred from homology"/>
<protein>
    <recommendedName>
        <fullName evidence="1">Large ribosomal subunit protein bL20</fullName>
    </recommendedName>
    <alternativeName>
        <fullName evidence="2">50S ribosomal protein L20</fullName>
    </alternativeName>
</protein>
<accession>B1IPL2</accession>
<comment type="function">
    <text evidence="1">Binds directly to 23S ribosomal RNA and is necessary for the in vitro assembly process of the 50S ribosomal subunit. It is not involved in the protein synthesizing functions of that subunit.</text>
</comment>
<comment type="similarity">
    <text evidence="1">Belongs to the bacterial ribosomal protein bL20 family.</text>
</comment>
<organism>
    <name type="scientific">Escherichia coli (strain ATCC 8739 / DSM 1576 / NBRC 3972 / NCIMB 8545 / WDCM 00012 / Crooks)</name>
    <dbReference type="NCBI Taxonomy" id="481805"/>
    <lineage>
        <taxon>Bacteria</taxon>
        <taxon>Pseudomonadati</taxon>
        <taxon>Pseudomonadota</taxon>
        <taxon>Gammaproteobacteria</taxon>
        <taxon>Enterobacterales</taxon>
        <taxon>Enterobacteriaceae</taxon>
        <taxon>Escherichia</taxon>
    </lineage>
</organism>
<keyword id="KW-0687">Ribonucleoprotein</keyword>
<keyword id="KW-0689">Ribosomal protein</keyword>
<keyword id="KW-0694">RNA-binding</keyword>
<keyword id="KW-0699">rRNA-binding</keyword>
<feature type="chain" id="PRO_1000080071" description="Large ribosomal subunit protein bL20">
    <location>
        <begin position="1"/>
        <end position="118"/>
    </location>
</feature>